<accession>Q7MFA1</accession>
<feature type="chain" id="PRO_0000269639" description="Hemin import ATP-binding protein HmuV">
    <location>
        <begin position="1"/>
        <end position="261"/>
    </location>
</feature>
<feature type="domain" description="ABC transporter" evidence="1">
    <location>
        <begin position="7"/>
        <end position="243"/>
    </location>
</feature>
<feature type="binding site" evidence="1">
    <location>
        <begin position="39"/>
        <end position="46"/>
    </location>
    <ligand>
        <name>ATP</name>
        <dbReference type="ChEBI" id="CHEBI:30616"/>
    </ligand>
</feature>
<evidence type="ECO:0000255" key="1">
    <source>
        <dbReference type="HAMAP-Rule" id="MF_01718"/>
    </source>
</evidence>
<proteinExistence type="inferred from homology"/>
<dbReference type="EC" id="7.6.2.-" evidence="1"/>
<dbReference type="EMBL" id="BA000038">
    <property type="protein sequence ID" value="BAC96445.1"/>
    <property type="molecule type" value="Genomic_DNA"/>
</dbReference>
<dbReference type="RefSeq" id="WP_011151801.1">
    <property type="nucleotide sequence ID" value="NC_005140.1"/>
</dbReference>
<dbReference type="SMR" id="Q7MFA1"/>
<dbReference type="STRING" id="672.VV93_v1c34050"/>
<dbReference type="KEGG" id="vvy:VVA0419"/>
<dbReference type="PATRIC" id="fig|196600.6.peg.3624"/>
<dbReference type="eggNOG" id="COG4559">
    <property type="taxonomic scope" value="Bacteria"/>
</dbReference>
<dbReference type="HOGENOM" id="CLU_000604_1_11_6"/>
<dbReference type="Proteomes" id="UP000002675">
    <property type="component" value="Chromosome II"/>
</dbReference>
<dbReference type="GO" id="GO:0005886">
    <property type="term" value="C:plasma membrane"/>
    <property type="evidence" value="ECO:0007669"/>
    <property type="project" value="UniProtKB-SubCell"/>
</dbReference>
<dbReference type="GO" id="GO:0005524">
    <property type="term" value="F:ATP binding"/>
    <property type="evidence" value="ECO:0007669"/>
    <property type="project" value="UniProtKB-KW"/>
</dbReference>
<dbReference type="GO" id="GO:0016887">
    <property type="term" value="F:ATP hydrolysis activity"/>
    <property type="evidence" value="ECO:0007669"/>
    <property type="project" value="InterPro"/>
</dbReference>
<dbReference type="CDD" id="cd03214">
    <property type="entry name" value="ABC_Iron-Siderophores_B12_Hemin"/>
    <property type="match status" value="1"/>
</dbReference>
<dbReference type="Gene3D" id="3.40.50.300">
    <property type="entry name" value="P-loop containing nucleotide triphosphate hydrolases"/>
    <property type="match status" value="1"/>
</dbReference>
<dbReference type="InterPro" id="IPR003593">
    <property type="entry name" value="AAA+_ATPase"/>
</dbReference>
<dbReference type="InterPro" id="IPR003439">
    <property type="entry name" value="ABC_transporter-like_ATP-bd"/>
</dbReference>
<dbReference type="InterPro" id="IPR027417">
    <property type="entry name" value="P-loop_NTPase"/>
</dbReference>
<dbReference type="NCBIfam" id="NF010068">
    <property type="entry name" value="PRK13548.1"/>
    <property type="match status" value="1"/>
</dbReference>
<dbReference type="PANTHER" id="PTHR42794">
    <property type="entry name" value="HEMIN IMPORT ATP-BINDING PROTEIN HMUV"/>
    <property type="match status" value="1"/>
</dbReference>
<dbReference type="PANTHER" id="PTHR42794:SF1">
    <property type="entry name" value="HEMIN IMPORT ATP-BINDING PROTEIN HMUV"/>
    <property type="match status" value="1"/>
</dbReference>
<dbReference type="Pfam" id="PF00005">
    <property type="entry name" value="ABC_tran"/>
    <property type="match status" value="1"/>
</dbReference>
<dbReference type="SMART" id="SM00382">
    <property type="entry name" value="AAA"/>
    <property type="match status" value="1"/>
</dbReference>
<dbReference type="SUPFAM" id="SSF52540">
    <property type="entry name" value="P-loop containing nucleoside triphosphate hydrolases"/>
    <property type="match status" value="1"/>
</dbReference>
<dbReference type="PROSITE" id="PS50893">
    <property type="entry name" value="ABC_TRANSPORTER_2"/>
    <property type="match status" value="1"/>
</dbReference>
<dbReference type="PROSITE" id="PS51261">
    <property type="entry name" value="HMUV"/>
    <property type="match status" value="1"/>
</dbReference>
<sequence length="261" mass="28281">MKKPVVLRGQNLSLQFASRQVLKQIDVAFCAGEVVALLGPNGAGKSSLLKLLSGEITSSQSIEYFGKAAKSWRSAALSRHLGLLPQSSSLTFPFLAREVVELGAIPLALSQAEVKAIAEKYMAITDVVHLADSLYPALSGGEKQRLHFARVLTQLDQSGDKKILMLDEPTSALDLAHQHNTLRVAKQFAKEQNACVIVVLHDLNLAAQYADRMVILHRGEIVVDASPEEALTPEIIDAVYGYKALIGRHPTLDFPLVQPAA</sequence>
<protein>
    <recommendedName>
        <fullName evidence="1">Hemin import ATP-binding protein HmuV</fullName>
        <ecNumber evidence="1">7.6.2.-</ecNumber>
    </recommendedName>
</protein>
<gene>
    <name evidence="1" type="primary">hmuV</name>
    <name type="ordered locus">VVA0419</name>
</gene>
<comment type="function">
    <text evidence="1">Part of the ABC transporter complex HmuTUV involved in hemin import. Responsible for energy coupling to the transport system.</text>
</comment>
<comment type="subunit">
    <text evidence="1">The complex is composed of two ATP-binding proteins (HmuV), two transmembrane proteins (HmuU) and a solute-binding protein (HmuT).</text>
</comment>
<comment type="subcellular location">
    <subcellularLocation>
        <location evidence="1">Cell inner membrane</location>
        <topology evidence="1">Peripheral membrane protein</topology>
    </subcellularLocation>
</comment>
<comment type="similarity">
    <text evidence="1">Belongs to the ABC transporter superfamily. Heme (hemin) importer (TC 3.A.1.14.5) family.</text>
</comment>
<reference key="1">
    <citation type="journal article" date="2003" name="Genome Res.">
        <title>Comparative genome analysis of Vibrio vulnificus, a marine pathogen.</title>
        <authorList>
            <person name="Chen C.-Y."/>
            <person name="Wu K.-M."/>
            <person name="Chang Y.-C."/>
            <person name="Chang C.-H."/>
            <person name="Tsai H.-C."/>
            <person name="Liao T.-L."/>
            <person name="Liu Y.-M."/>
            <person name="Chen H.-J."/>
            <person name="Shen A.B.-T."/>
            <person name="Li J.-C."/>
            <person name="Su T.-L."/>
            <person name="Shao C.-P."/>
            <person name="Lee C.-T."/>
            <person name="Hor L.-I."/>
            <person name="Tsai S.-F."/>
        </authorList>
    </citation>
    <scope>NUCLEOTIDE SEQUENCE [LARGE SCALE GENOMIC DNA]</scope>
    <source>
        <strain>YJ016</strain>
    </source>
</reference>
<organism>
    <name type="scientific">Vibrio vulnificus (strain YJ016)</name>
    <dbReference type="NCBI Taxonomy" id="196600"/>
    <lineage>
        <taxon>Bacteria</taxon>
        <taxon>Pseudomonadati</taxon>
        <taxon>Pseudomonadota</taxon>
        <taxon>Gammaproteobacteria</taxon>
        <taxon>Vibrionales</taxon>
        <taxon>Vibrionaceae</taxon>
        <taxon>Vibrio</taxon>
    </lineage>
</organism>
<name>HMUV_VIBVY</name>
<keyword id="KW-0067">ATP-binding</keyword>
<keyword id="KW-0997">Cell inner membrane</keyword>
<keyword id="KW-1003">Cell membrane</keyword>
<keyword id="KW-0472">Membrane</keyword>
<keyword id="KW-0547">Nucleotide-binding</keyword>
<keyword id="KW-1278">Translocase</keyword>
<keyword id="KW-0813">Transport</keyword>